<accession>Q00023</accession>
<name>LP9_AGABI</name>
<gene>
    <name evidence="9" type="primary">CEL1</name>
</gene>
<sequence length="320" mass="33754">MRLPSRQQVLKMLATFSLALGLFAAKVQAHGGVIGYSWDGTWYEGWHPYNTPVGQTSIERPWATFDPIMDATASTVGCNNDGNPGPNQLTATVAAGTAITAYWNQVWPHPYGPMTTYLGKCPGSSCDGVNTNSLKWFKIDEAGLLSGTVGKGVWGSGKMIDQNNSWTTTIPSTVPSGAYMIRFETIALHSLPAQIYPECAQLTITGGGNRAPTSSELVSFPGGYSNSDPGLTVNLYTQEAMTDTTYIVPGPPLYGSGGNGGSPTTTPHTTTPITTSPPPTSTPGTIPQYGQCGGIGWTGGTGCVAPYQCKVINDYYSQCL</sequence>
<comment type="function">
    <text evidence="8">Lytic polysaccharide monooxygenase (LPMO)-like protein that binds strongly to cellulose (PubMed:8181702). Seems not to acts as an endoglucanase, a ceUobiohydrolase able to hydrolyze fluorogenic cellobiosides, a /3-glucosidase, a xylanase, nor a cellobiose:quinone oxidoreductase (PubMed:8181702).</text>
</comment>
<comment type="catalytic activity">
    <reaction evidence="11">
        <text>[(1-&gt;4)-beta-D-glucosyl]n+m + reduced acceptor + O2 = 4-dehydro-beta-D-glucosyl-[(1-&gt;4)-beta-D-glucosyl]n-1 + [(1-&gt;4)-beta-D-glucosyl]m + acceptor + H2O.</text>
        <dbReference type="EC" id="1.14.99.56"/>
    </reaction>
</comment>
<comment type="cofactor">
    <cofactor evidence="2">
        <name>Cu(2+)</name>
        <dbReference type="ChEBI" id="CHEBI:29036"/>
    </cofactor>
    <text evidence="2">Binds 1 copper ion per subunit.</text>
</comment>
<comment type="subcellular location">
    <subcellularLocation>
        <location evidence="8">Secreted</location>
    </subcellularLocation>
</comment>
<comment type="induction">
    <text evidence="7 8">Expression is induced in the presence of cellulose, but not fructose or malt.</text>
</comment>
<comment type="domain">
    <text evidence="7">Has a modular structure: an endo-beta-1,4-glucanase catalytic module at the N-terminus, a linker rich in serines and threonines, and a C-terminal carbohydrate-binding module (CBM). The CBM domain is essential for binding to and subsequent oxidative degradation of polysaccharide substrate.</text>
</comment>
<comment type="biotechnology">
    <text evidence="2">Lignocellulose is the most abundant polymeric composite on Earth and is a recalcitrant but promising renewable substrate for industrial biotechnology applications. Together with cellobiose dehydrogenases (CDHs) an enzymatic system capable of oxidative cellulose cleavage is formed, which increases the efficiency of cellulases and put LPMOs at focus of biofuel research.</text>
</comment>
<comment type="similarity">
    <text evidence="10">Belongs to the polysaccharide monooxygenase AA9 family.</text>
</comment>
<keyword id="KW-0119">Carbohydrate metabolism</keyword>
<keyword id="KW-0136">Cellulose degradation</keyword>
<keyword id="KW-0186">Copper</keyword>
<keyword id="KW-1015">Disulfide bond</keyword>
<keyword id="KW-0325">Glycoprotein</keyword>
<keyword id="KW-0479">Metal-binding</keyword>
<keyword id="KW-0503">Monooxygenase</keyword>
<keyword id="KW-0560">Oxidoreductase</keyword>
<keyword id="KW-0624">Polysaccharide degradation</keyword>
<keyword id="KW-0964">Secreted</keyword>
<keyword id="KW-0732">Signal</keyword>
<evidence type="ECO:0000250" key="1">
    <source>
        <dbReference type="UniProtKB" id="Q1K8B6"/>
    </source>
</evidence>
<evidence type="ECO:0000250" key="2">
    <source>
        <dbReference type="UniProtKB" id="Q4WP32"/>
    </source>
</evidence>
<evidence type="ECO:0000250" key="3">
    <source>
        <dbReference type="UniProtKB" id="Q7Z9M7"/>
    </source>
</evidence>
<evidence type="ECO:0000255" key="4"/>
<evidence type="ECO:0000255" key="5">
    <source>
        <dbReference type="PROSITE-ProRule" id="PRU00597"/>
    </source>
</evidence>
<evidence type="ECO:0000256" key="6">
    <source>
        <dbReference type="SAM" id="MobiDB-lite"/>
    </source>
</evidence>
<evidence type="ECO:0000269" key="7">
    <source>
    </source>
</evidence>
<evidence type="ECO:0000269" key="8">
    <source>
    </source>
</evidence>
<evidence type="ECO:0000303" key="9">
    <source>
    </source>
</evidence>
<evidence type="ECO:0000305" key="10"/>
<evidence type="ECO:0000305" key="11">
    <source>
    </source>
</evidence>
<feature type="signal peptide" evidence="4">
    <location>
        <begin position="1"/>
        <end position="29"/>
    </location>
</feature>
<feature type="chain" id="PRO_0000008031" description="AA9 family lytic polysaccharide monooxygenase-like protein CEL1">
    <location>
        <begin position="30"/>
        <end position="320"/>
    </location>
</feature>
<feature type="domain" description="CBM1" evidence="5">
    <location>
        <begin position="284"/>
        <end position="320"/>
    </location>
</feature>
<feature type="region of interest" description="Disordered" evidence="6">
    <location>
        <begin position="255"/>
        <end position="284"/>
    </location>
</feature>
<feature type="compositionally biased region" description="Low complexity" evidence="6">
    <location>
        <begin position="262"/>
        <end position="274"/>
    </location>
</feature>
<feature type="binding site" evidence="3">
    <location>
        <position position="109"/>
    </location>
    <ligand>
        <name>Cu(2+)</name>
        <dbReference type="ChEBI" id="CHEBI:29036"/>
        <note>catalytic</note>
    </ligand>
</feature>
<feature type="binding site" evidence="1">
    <location>
        <position position="189"/>
    </location>
    <ligand>
        <name>O2</name>
        <dbReference type="ChEBI" id="CHEBI:15379"/>
    </ligand>
</feature>
<feature type="binding site" evidence="1">
    <location>
        <position position="194"/>
    </location>
    <ligand>
        <name>O2</name>
        <dbReference type="ChEBI" id="CHEBI:15379"/>
    </ligand>
</feature>
<feature type="binding site" evidence="1">
    <location>
        <position position="196"/>
    </location>
    <ligand>
        <name>Cu(2+)</name>
        <dbReference type="ChEBI" id="CHEBI:29036"/>
        <note>catalytic</note>
    </ligand>
</feature>
<feature type="glycosylation site" description="N-linked (GlcNAc...) asparagine" evidence="4">
    <location>
        <position position="163"/>
    </location>
</feature>
<feature type="disulfide bond" evidence="1">
    <location>
        <begin position="78"/>
        <end position="199"/>
    </location>
</feature>
<feature type="disulfide bond" evidence="3">
    <location>
        <begin position="121"/>
        <end position="126"/>
    </location>
</feature>
<reference key="1">
    <citation type="journal article" date="1992" name="Gene">
        <title>Isolation and characterization of a cellulose-growth-specific gene from Agaricus bisporus.</title>
        <authorList>
            <person name="Raguz S."/>
            <person name="Yaguee E."/>
            <person name="Wood D.A."/>
            <person name="Thurston C.F."/>
        </authorList>
    </citation>
    <scope>NUCLEOTIDE SEQUENCE [GENOMIC DNA]</scope>
    <scope>INDUCTION</scope>
    <scope>DOMAIN</scope>
    <source>
        <strain>D649</strain>
    </source>
</reference>
<reference key="2">
    <citation type="journal article" date="1994" name="FEMS Microbiol. Lett.">
        <title>CEL1: a novel cellulose binding protein secreted by Agaricus bisporus during growth on crystalline cellulose.</title>
        <authorList>
            <person name="Armesilla A.L."/>
            <person name="Thurston C.F."/>
            <person name="Yaguee E."/>
        </authorList>
    </citation>
    <scope>NUCLEOTIDE SEQUENCE [GENOMIC DNA]</scope>
    <scope>FUNCTION</scope>
    <scope>SUBCELLULAR LOCATION</scope>
    <scope>INDUCTION</scope>
    <source>
        <strain>D649</strain>
    </source>
</reference>
<dbReference type="EC" id="1.14.99.56" evidence="11"/>
<dbReference type="EMBL" id="M86356">
    <property type="protein sequence ID" value="AAA53434.1"/>
    <property type="molecule type" value="Genomic_DNA"/>
</dbReference>
<dbReference type="PIR" id="JC1311">
    <property type="entry name" value="JC1311"/>
</dbReference>
<dbReference type="SMR" id="Q00023"/>
<dbReference type="CAZy" id="AA9">
    <property type="family name" value="Auxiliary Activities 9"/>
</dbReference>
<dbReference type="CAZy" id="CBM1">
    <property type="family name" value="Carbohydrate-Binding Module Family 1"/>
</dbReference>
<dbReference type="GlyCosmos" id="Q00023">
    <property type="glycosylation" value="1 site, No reported glycans"/>
</dbReference>
<dbReference type="GO" id="GO:0005576">
    <property type="term" value="C:extracellular region"/>
    <property type="evidence" value="ECO:0007669"/>
    <property type="project" value="UniProtKB-SubCell"/>
</dbReference>
<dbReference type="GO" id="GO:0030248">
    <property type="term" value="F:cellulose binding"/>
    <property type="evidence" value="ECO:0007669"/>
    <property type="project" value="InterPro"/>
</dbReference>
<dbReference type="GO" id="GO:0046872">
    <property type="term" value="F:metal ion binding"/>
    <property type="evidence" value="ECO:0007669"/>
    <property type="project" value="UniProtKB-KW"/>
</dbReference>
<dbReference type="GO" id="GO:0004497">
    <property type="term" value="F:monooxygenase activity"/>
    <property type="evidence" value="ECO:0007669"/>
    <property type="project" value="UniProtKB-KW"/>
</dbReference>
<dbReference type="GO" id="GO:0030245">
    <property type="term" value="P:cellulose catabolic process"/>
    <property type="evidence" value="ECO:0007669"/>
    <property type="project" value="UniProtKB-KW"/>
</dbReference>
<dbReference type="CDD" id="cd21175">
    <property type="entry name" value="LPMO_AA9"/>
    <property type="match status" value="1"/>
</dbReference>
<dbReference type="Gene3D" id="2.70.50.70">
    <property type="match status" value="1"/>
</dbReference>
<dbReference type="InterPro" id="IPR049892">
    <property type="entry name" value="AA9"/>
</dbReference>
<dbReference type="InterPro" id="IPR005103">
    <property type="entry name" value="AA9_LPMO"/>
</dbReference>
<dbReference type="InterPro" id="IPR035971">
    <property type="entry name" value="CBD_sf"/>
</dbReference>
<dbReference type="InterPro" id="IPR000254">
    <property type="entry name" value="Cellulose-bd_dom_fun"/>
</dbReference>
<dbReference type="PANTHER" id="PTHR33353:SF19">
    <property type="entry name" value="GLYCOSYLHYDROLASE FAMILY 61-8 PROTEIN"/>
    <property type="match status" value="1"/>
</dbReference>
<dbReference type="PANTHER" id="PTHR33353">
    <property type="entry name" value="PUTATIVE (AFU_ORTHOLOGUE AFUA_1G12560)-RELATED"/>
    <property type="match status" value="1"/>
</dbReference>
<dbReference type="Pfam" id="PF03443">
    <property type="entry name" value="AA9"/>
    <property type="match status" value="1"/>
</dbReference>
<dbReference type="Pfam" id="PF00734">
    <property type="entry name" value="CBM_1"/>
    <property type="match status" value="1"/>
</dbReference>
<dbReference type="SMART" id="SM00236">
    <property type="entry name" value="fCBD"/>
    <property type="match status" value="1"/>
</dbReference>
<dbReference type="SUPFAM" id="SSF57180">
    <property type="entry name" value="Cellulose-binding domain"/>
    <property type="match status" value="1"/>
</dbReference>
<dbReference type="PROSITE" id="PS00562">
    <property type="entry name" value="CBM1_1"/>
    <property type="match status" value="1"/>
</dbReference>
<dbReference type="PROSITE" id="PS51164">
    <property type="entry name" value="CBM1_2"/>
    <property type="match status" value="1"/>
</dbReference>
<protein>
    <recommendedName>
        <fullName evidence="9">AA9 family lytic polysaccharide monooxygenase-like protein CEL1</fullName>
        <ecNumber evidence="11">1.14.99.56</ecNumber>
    </recommendedName>
    <alternativeName>
        <fullName evidence="10">Cellulase 1</fullName>
        <shortName evidence="9">CEL1</shortName>
    </alternativeName>
    <alternativeName>
        <fullName evidence="10">Glycosyl hydrolase 61 family protein CEL1</fullName>
    </alternativeName>
</protein>
<proteinExistence type="evidence at transcript level"/>
<organism>
    <name type="scientific">Agaricus bisporus</name>
    <name type="common">White button mushroom</name>
    <dbReference type="NCBI Taxonomy" id="5341"/>
    <lineage>
        <taxon>Eukaryota</taxon>
        <taxon>Fungi</taxon>
        <taxon>Dikarya</taxon>
        <taxon>Basidiomycota</taxon>
        <taxon>Agaricomycotina</taxon>
        <taxon>Agaricomycetes</taxon>
        <taxon>Agaricomycetidae</taxon>
        <taxon>Agaricales</taxon>
        <taxon>Agaricineae</taxon>
        <taxon>Agaricaceae</taxon>
        <taxon>Agaricus</taxon>
    </lineage>
</organism>